<gene>
    <name evidence="1" type="primary">rnhB</name>
    <name type="ordered locus">SRU_2372</name>
</gene>
<protein>
    <recommendedName>
        <fullName evidence="1">Ribonuclease HII</fullName>
        <shortName evidence="1">RNase HII</shortName>
        <ecNumber evidence="1">3.1.26.4</ecNumber>
    </recommendedName>
</protein>
<reference key="1">
    <citation type="journal article" date="2005" name="Proc. Natl. Acad. Sci. U.S.A.">
        <title>The genome of Salinibacter ruber: convergence and gene exchange among hyperhalophilic bacteria and archaea.</title>
        <authorList>
            <person name="Mongodin E.F."/>
            <person name="Nelson K.E."/>
            <person name="Daugherty S."/>
            <person name="DeBoy R.T."/>
            <person name="Wister J."/>
            <person name="Khouri H."/>
            <person name="Weidman J."/>
            <person name="Walsh D.A."/>
            <person name="Papke R.T."/>
            <person name="Sanchez Perez G."/>
            <person name="Sharma A.K."/>
            <person name="Nesbo C.L."/>
            <person name="MacLeod D."/>
            <person name="Bapteste E."/>
            <person name="Doolittle W.F."/>
            <person name="Charlebois R.L."/>
            <person name="Legault B."/>
            <person name="Rodriguez-Valera F."/>
        </authorList>
    </citation>
    <scope>NUCLEOTIDE SEQUENCE [LARGE SCALE GENOMIC DNA]</scope>
    <source>
        <strain>DSM 13855 / CECT 5946 / M31</strain>
    </source>
</reference>
<organism>
    <name type="scientific">Salinibacter ruber (strain DSM 13855 / M31)</name>
    <dbReference type="NCBI Taxonomy" id="309807"/>
    <lineage>
        <taxon>Bacteria</taxon>
        <taxon>Pseudomonadati</taxon>
        <taxon>Rhodothermota</taxon>
        <taxon>Rhodothermia</taxon>
        <taxon>Rhodothermales</taxon>
        <taxon>Salinibacteraceae</taxon>
        <taxon>Salinibacter</taxon>
    </lineage>
</organism>
<dbReference type="EC" id="3.1.26.4" evidence="1"/>
<dbReference type="EMBL" id="CP000159">
    <property type="protein sequence ID" value="ABC45855.1"/>
    <property type="molecule type" value="Genomic_DNA"/>
</dbReference>
<dbReference type="RefSeq" id="WP_011405090.1">
    <property type="nucleotide sequence ID" value="NC_007677.1"/>
</dbReference>
<dbReference type="RefSeq" id="YP_446472.1">
    <property type="nucleotide sequence ID" value="NC_007677.1"/>
</dbReference>
<dbReference type="SMR" id="Q2S009"/>
<dbReference type="STRING" id="309807.SRU_2372"/>
<dbReference type="EnsemblBacteria" id="ABC45855">
    <property type="protein sequence ID" value="ABC45855"/>
    <property type="gene ID" value="SRU_2372"/>
</dbReference>
<dbReference type="GeneID" id="83729393"/>
<dbReference type="KEGG" id="sru:SRU_2372"/>
<dbReference type="PATRIC" id="fig|309807.25.peg.2471"/>
<dbReference type="eggNOG" id="COG0164">
    <property type="taxonomic scope" value="Bacteria"/>
</dbReference>
<dbReference type="HOGENOM" id="CLU_036532_3_2_10"/>
<dbReference type="OrthoDB" id="9803420at2"/>
<dbReference type="Proteomes" id="UP000008674">
    <property type="component" value="Chromosome"/>
</dbReference>
<dbReference type="GO" id="GO:0005737">
    <property type="term" value="C:cytoplasm"/>
    <property type="evidence" value="ECO:0007669"/>
    <property type="project" value="UniProtKB-SubCell"/>
</dbReference>
<dbReference type="GO" id="GO:0032299">
    <property type="term" value="C:ribonuclease H2 complex"/>
    <property type="evidence" value="ECO:0007669"/>
    <property type="project" value="TreeGrafter"/>
</dbReference>
<dbReference type="GO" id="GO:0030145">
    <property type="term" value="F:manganese ion binding"/>
    <property type="evidence" value="ECO:0007669"/>
    <property type="project" value="UniProtKB-UniRule"/>
</dbReference>
<dbReference type="GO" id="GO:0003723">
    <property type="term" value="F:RNA binding"/>
    <property type="evidence" value="ECO:0007669"/>
    <property type="project" value="InterPro"/>
</dbReference>
<dbReference type="GO" id="GO:0004523">
    <property type="term" value="F:RNA-DNA hybrid ribonuclease activity"/>
    <property type="evidence" value="ECO:0007669"/>
    <property type="project" value="UniProtKB-UniRule"/>
</dbReference>
<dbReference type="GO" id="GO:0043137">
    <property type="term" value="P:DNA replication, removal of RNA primer"/>
    <property type="evidence" value="ECO:0007669"/>
    <property type="project" value="TreeGrafter"/>
</dbReference>
<dbReference type="GO" id="GO:0006298">
    <property type="term" value="P:mismatch repair"/>
    <property type="evidence" value="ECO:0007669"/>
    <property type="project" value="TreeGrafter"/>
</dbReference>
<dbReference type="CDD" id="cd07182">
    <property type="entry name" value="RNase_HII_bacteria_HII_like"/>
    <property type="match status" value="1"/>
</dbReference>
<dbReference type="Gene3D" id="3.30.420.10">
    <property type="entry name" value="Ribonuclease H-like superfamily/Ribonuclease H"/>
    <property type="match status" value="1"/>
</dbReference>
<dbReference type="HAMAP" id="MF_00052_B">
    <property type="entry name" value="RNase_HII_B"/>
    <property type="match status" value="1"/>
</dbReference>
<dbReference type="InterPro" id="IPR022898">
    <property type="entry name" value="RNase_HII"/>
</dbReference>
<dbReference type="InterPro" id="IPR001352">
    <property type="entry name" value="RNase_HII/HIII"/>
</dbReference>
<dbReference type="InterPro" id="IPR024567">
    <property type="entry name" value="RNase_HII/HIII_dom"/>
</dbReference>
<dbReference type="InterPro" id="IPR012337">
    <property type="entry name" value="RNaseH-like_sf"/>
</dbReference>
<dbReference type="InterPro" id="IPR036397">
    <property type="entry name" value="RNaseH_sf"/>
</dbReference>
<dbReference type="NCBIfam" id="NF000595">
    <property type="entry name" value="PRK00015.1-3"/>
    <property type="match status" value="1"/>
</dbReference>
<dbReference type="PANTHER" id="PTHR10954">
    <property type="entry name" value="RIBONUCLEASE H2 SUBUNIT A"/>
    <property type="match status" value="1"/>
</dbReference>
<dbReference type="PANTHER" id="PTHR10954:SF18">
    <property type="entry name" value="RIBONUCLEASE HII"/>
    <property type="match status" value="1"/>
</dbReference>
<dbReference type="Pfam" id="PF01351">
    <property type="entry name" value="RNase_HII"/>
    <property type="match status" value="1"/>
</dbReference>
<dbReference type="SUPFAM" id="SSF53098">
    <property type="entry name" value="Ribonuclease H-like"/>
    <property type="match status" value="1"/>
</dbReference>
<dbReference type="PROSITE" id="PS51975">
    <property type="entry name" value="RNASE_H_2"/>
    <property type="match status" value="1"/>
</dbReference>
<evidence type="ECO:0000255" key="1">
    <source>
        <dbReference type="HAMAP-Rule" id="MF_00052"/>
    </source>
</evidence>
<evidence type="ECO:0000255" key="2">
    <source>
        <dbReference type="PROSITE-ProRule" id="PRU01319"/>
    </source>
</evidence>
<feature type="chain" id="PRO_0000235762" description="Ribonuclease HII">
    <location>
        <begin position="1"/>
        <end position="200"/>
    </location>
</feature>
<feature type="domain" description="RNase H type-2" evidence="2">
    <location>
        <begin position="14"/>
        <end position="200"/>
    </location>
</feature>
<feature type="binding site" evidence="1">
    <location>
        <position position="20"/>
    </location>
    <ligand>
        <name>a divalent metal cation</name>
        <dbReference type="ChEBI" id="CHEBI:60240"/>
    </ligand>
</feature>
<feature type="binding site" evidence="1">
    <location>
        <position position="21"/>
    </location>
    <ligand>
        <name>a divalent metal cation</name>
        <dbReference type="ChEBI" id="CHEBI:60240"/>
    </ligand>
</feature>
<feature type="binding site" evidence="1">
    <location>
        <position position="112"/>
    </location>
    <ligand>
        <name>a divalent metal cation</name>
        <dbReference type="ChEBI" id="CHEBI:60240"/>
    </ligand>
</feature>
<comment type="function">
    <text evidence="1">Endonuclease that specifically degrades the RNA of RNA-DNA hybrids.</text>
</comment>
<comment type="catalytic activity">
    <reaction evidence="1">
        <text>Endonucleolytic cleavage to 5'-phosphomonoester.</text>
        <dbReference type="EC" id="3.1.26.4"/>
    </reaction>
</comment>
<comment type="cofactor">
    <cofactor evidence="1">
        <name>Mn(2+)</name>
        <dbReference type="ChEBI" id="CHEBI:29035"/>
    </cofactor>
    <cofactor evidence="1">
        <name>Mg(2+)</name>
        <dbReference type="ChEBI" id="CHEBI:18420"/>
    </cofactor>
    <text evidence="1">Manganese or magnesium. Binds 1 divalent metal ion per monomer in the absence of substrate. May bind a second metal ion after substrate binding.</text>
</comment>
<comment type="subcellular location">
    <subcellularLocation>
        <location evidence="1">Cytoplasm</location>
    </subcellularLocation>
</comment>
<comment type="similarity">
    <text evidence="1">Belongs to the RNase HII family.</text>
</comment>
<sequence>MLSHERRLWADGYERVAGLDEAGRGCLAGPVVAAAVIMPPQVEITAIQDSKALSEGQRLDARATIEDEAVAASIARCSPTEIDDRNILQAALEAMRRAASGCRPPPDFVLVDGNQWDRNLVDAPWPHETVVKGDAKSQSIAAASILAKTERDALMRDLHEAHPEYDWASNVGYPTQQHYDALREHGATPHHRQSFTLFRD</sequence>
<keyword id="KW-0963">Cytoplasm</keyword>
<keyword id="KW-0255">Endonuclease</keyword>
<keyword id="KW-0378">Hydrolase</keyword>
<keyword id="KW-0464">Manganese</keyword>
<keyword id="KW-0479">Metal-binding</keyword>
<keyword id="KW-0540">Nuclease</keyword>
<keyword id="KW-1185">Reference proteome</keyword>
<accession>Q2S009</accession>
<proteinExistence type="inferred from homology"/>
<name>RNH2_SALRD</name>